<feature type="chain" id="PRO_0000432845" description="Cohesin subunit scc-3" evidence="11">
    <location>
        <begin position="1"/>
        <end position="1096"/>
    </location>
</feature>
<feature type="domain" description="SCD" evidence="3">
    <location>
        <begin position="320"/>
        <end position="405"/>
    </location>
</feature>
<feature type="region of interest" description="Disordered" evidence="4">
    <location>
        <begin position="1"/>
        <end position="53"/>
    </location>
</feature>
<feature type="region of interest" description="Disordered" evidence="4">
    <location>
        <begin position="67"/>
        <end position="106"/>
    </location>
</feature>
<feature type="region of interest" description="Disordered" evidence="4">
    <location>
        <begin position="1057"/>
        <end position="1096"/>
    </location>
</feature>
<feature type="coiled-coil region" evidence="2">
    <location>
        <begin position="261"/>
        <end position="312"/>
    </location>
</feature>
<feature type="compositionally biased region" description="Polar residues" evidence="4">
    <location>
        <begin position="1"/>
        <end position="21"/>
    </location>
</feature>
<feature type="compositionally biased region" description="Polar residues" evidence="4">
    <location>
        <begin position="1060"/>
        <end position="1073"/>
    </location>
</feature>
<feature type="mutagenesis site" description="In ku263; sterile. Vulval cell division defects, resulting in asymmetric vulval invaginations at the L4 larval stage. Gonad development defects, where the gonad arms are shorter than in wild-type. Reduces the number of oocytes in the proximal gonad arm. The hermaphrodite gonad lacks a transition zone and pachytene nuclei and oocytes have an abnormal morphology. Fewer uterine cells, abnormal and small uteri and an endomitotic oocyte phenotype (also called an Emo phenotype), in which chromosomes have gone through endoreduplication without cytokinesis and karyokinesis. Impairs assembly of the synaptonemal complex between homologous chromosomes and disrupts homologous chromosome pairing, sister chromatid cohesion and localization of cohesin complex subunit rec-8 to chromosomes in the pachytene zone of the gonad. Defective DNA double-strand break repair during meiosis resulting in an accumulation of rad-51-positive recombination intermediates in the mid and late pachytene region of the germline. No increase in apoptosis in response to the accumulation of recombination intermediates, indicative of a defective DNA damage response. Furthermore, hus-1, a component of the 9-1-1 cell-cycle checkpoint response complex which is required for inducing apoptosis in response to DNA damage, does not accumulate on the recombination intermediates." evidence="8 10">
    <location>
        <begin position="800"/>
        <end position="1096"/>
    </location>
</feature>
<keyword id="KW-0131">Cell cycle</keyword>
<keyword id="KW-0132">Cell division</keyword>
<keyword id="KW-0158">Chromosome</keyword>
<keyword id="KW-0175">Coiled coil</keyword>
<keyword id="KW-0498">Mitosis</keyword>
<keyword id="KW-0539">Nucleus</keyword>
<keyword id="KW-1185">Reference proteome</keyword>
<organism evidence="12">
    <name type="scientific">Caenorhabditis elegans</name>
    <dbReference type="NCBI Taxonomy" id="6239"/>
    <lineage>
        <taxon>Eukaryota</taxon>
        <taxon>Metazoa</taxon>
        <taxon>Ecdysozoa</taxon>
        <taxon>Nematoda</taxon>
        <taxon>Chromadorea</taxon>
        <taxon>Rhabditida</taxon>
        <taxon>Rhabditina</taxon>
        <taxon>Rhabditomorpha</taxon>
        <taxon>Rhabditoidea</taxon>
        <taxon>Rhabditidae</taxon>
        <taxon>Peloderinae</taxon>
        <taxon>Caenorhabditis</taxon>
    </lineage>
</organism>
<accession>Q19555</accession>
<gene>
    <name evidence="13" type="primary">scc-3</name>
    <name evidence="13" type="ORF">F18E2.3</name>
</gene>
<reference evidence="12" key="1">
    <citation type="journal article" date="1998" name="Science">
        <title>Genome sequence of the nematode C. elegans: a platform for investigating biology.</title>
        <authorList>
            <consortium name="The C. elegans sequencing consortium"/>
        </authorList>
    </citation>
    <scope>NUCLEOTIDE SEQUENCE [LARGE SCALE GENOMIC DNA]</scope>
    <source>
        <strain evidence="12">Bristol N2</strain>
    </source>
</reference>
<reference evidence="11" key="2">
    <citation type="journal article" date="2003" name="Exp. Cell Res.">
        <title>The Caenorhabditis elegans SCC-3 homologue is required for meiotic synapsis and for proper chromosome disjunction in mitosis and meiosis.</title>
        <authorList>
            <person name="Pasierbek P."/>
            <person name="Fodermayr M."/>
            <person name="Jantsch V."/>
            <person name="Jantsch M."/>
            <person name="Schweizer D."/>
            <person name="Loidl J."/>
        </authorList>
    </citation>
    <scope>FUNCTION</scope>
    <scope>SUBCELLULAR LOCATION</scope>
    <scope>TISSUE SPECIFICITY</scope>
    <scope>DISRUPTION PHENOTYPE</scope>
</reference>
<reference evidence="11" key="3">
    <citation type="journal article" date="2003" name="Mol. Biol. Cell">
        <title>Distinct developmental function of two Caenorhabditis elegans homologs of the cohesin subunit Scc1/Rad21.</title>
        <authorList>
            <person name="Mito Y."/>
            <person name="Sugimoto A."/>
            <person name="Yamamoto M."/>
        </authorList>
    </citation>
    <scope>FUNCTION</scope>
    <scope>DISRUPTION PHENOTYPE</scope>
</reference>
<reference evidence="11" key="4">
    <citation type="journal article" date="2003" name="Mol. Cell. Biol.">
        <title>Caenorhabditis elegans EVL-14/PDS-5 and SCC-3 are essential for sister chromatid cohesion in meiosis and mitosis.</title>
        <authorList>
            <person name="Wang F."/>
            <person name="Yoder J."/>
            <person name="Antoshechkin I."/>
            <person name="Han M."/>
        </authorList>
    </citation>
    <scope>FUNCTION</scope>
    <scope>DISRUPTION PHENOTYPE</scope>
    <scope>MUTAGENESIS OF 800-GLN--PHE-1096</scope>
</reference>
<reference evidence="11" key="5">
    <citation type="journal article" date="2003" name="Nature">
        <title>Chromosome cohesion is regulated by a clock gene paralogue TIM-1.</title>
        <authorList>
            <person name="Chan R.C."/>
            <person name="Chan A."/>
            <person name="Jeon M."/>
            <person name="Wu T.F."/>
            <person name="Pasqualone D."/>
            <person name="Rougvie A.E."/>
            <person name="Meyer B.J."/>
        </authorList>
    </citation>
    <scope>FUNCTION</scope>
    <scope>IDENTIFICATION IN THE COHESIN COMPLEX</scope>
    <scope>INTERACTION WITH SMC-1; SMC-3; SCC-1 AND TIM-1</scope>
    <scope>SUBCELLULAR LOCATION</scope>
    <scope>DISRUPTION PHENOTYPE</scope>
</reference>
<reference key="6">
    <citation type="journal article" date="2006" name="PLoS Biol.">
        <title>Metazoan Scc4 homologs link sister chromatid cohesion to cell and axon migration guidance.</title>
        <authorList>
            <person name="Seitan V.C."/>
            <person name="Banks P."/>
            <person name="Laval S."/>
            <person name="Majid N.A."/>
            <person name="Dorsett D."/>
            <person name="Rana A."/>
            <person name="Smith J."/>
            <person name="Bateman A."/>
            <person name="Krpic S."/>
            <person name="Hostert A."/>
            <person name="Rollins R.A."/>
            <person name="Erdjument-Bromage H."/>
            <person name="Tempst P."/>
            <person name="Benard C.Y."/>
            <person name="Hekimi S."/>
            <person name="Newbury S.F."/>
            <person name="Strachan T."/>
        </authorList>
    </citation>
    <scope>FUNCTION</scope>
    <scope>DISRUPTION PHENOTYPE</scope>
</reference>
<reference evidence="11" key="7">
    <citation type="journal article" date="2011" name="Curr. Biol.">
        <title>Loading of meiotic cohesin by SCC-2 is required for early processing of DSBs and for the DNA damage checkpoint.</title>
        <authorList>
            <person name="Lightfoot J."/>
            <person name="Testori S."/>
            <person name="Barroso C."/>
            <person name="Martinez-Perez E."/>
        </authorList>
    </citation>
    <scope>FUNCTION</scope>
    <scope>MUTAGENESIS OF 800-GLN--PHE-1096</scope>
</reference>
<evidence type="ECO:0000250" key="1">
    <source>
        <dbReference type="UniProtKB" id="P40541"/>
    </source>
</evidence>
<evidence type="ECO:0000255" key="2"/>
<evidence type="ECO:0000255" key="3">
    <source>
        <dbReference type="PROSITE-ProRule" id="PRU00750"/>
    </source>
</evidence>
<evidence type="ECO:0000256" key="4">
    <source>
        <dbReference type="SAM" id="MobiDB-lite"/>
    </source>
</evidence>
<evidence type="ECO:0000269" key="5">
    <source>
    </source>
</evidence>
<evidence type="ECO:0000269" key="6">
    <source>
    </source>
</evidence>
<evidence type="ECO:0000269" key="7">
    <source>
    </source>
</evidence>
<evidence type="ECO:0000269" key="8">
    <source>
    </source>
</evidence>
<evidence type="ECO:0000269" key="9">
    <source>
    </source>
</evidence>
<evidence type="ECO:0000269" key="10">
    <source>
    </source>
</evidence>
<evidence type="ECO:0000305" key="11"/>
<evidence type="ECO:0000312" key="12">
    <source>
        <dbReference type="Proteomes" id="UP000001940"/>
    </source>
</evidence>
<evidence type="ECO:0000312" key="13">
    <source>
        <dbReference type="WormBase" id="F18E2.3"/>
    </source>
</evidence>
<comment type="function">
    <text evidence="1 5 6 7 8 9 10">Component of the cohesin complex, a complex required for the cohesion of sister chromatids after DNA replication (PubMed:12827206). The cohesin complex apparently forms a large proteinaceous ring within which sister chromatids can be trapped (By similarity). At anaphase, the scc-1 subunit of the complex is cleaved and dissociates from chromatin, allowing sister chromatids to segregate (By similarity). The cohesin complex may also play a role in spindle pole assembly during mitosis (By similarity). Plays an essential role in cell division during embryonic development (PubMed:12808038, PubMed:12827206, PubMed:14560015, PubMed:16802858). Required for the assembly of the synaptonemal complex between homologous chromosomes to promote sister chromatid cohesion during mitosis and meiosis (PubMed:14499625, PubMed:14560015). Has a role in stabilization of homologous chromosome associations during meiotic synapsis (PubMed:12827206). Required for chromosome segregation during mitosis and meiosis (PubMed:12808038, PubMed:14499625, PubMed:14560015, PubMed:16802858). Plays a role in DNA double-strand break (DSB) repair during meiotic recombination and promotes the assembly of the 9-1-1 cell-cycle checkpoint response complex which is required for inducing apoptosis in response to DNA damage, at DNA damage sites (PubMed:21856158).</text>
</comment>
<comment type="subunit">
    <text evidence="6">Component of the cohesin complex, composed of the smc-1 and smc-3 heterodimer attached via their hinge domain, scc-1 which links them, and scc-3 (PubMed:12827206). Interacts with scc-1, smc-1 and tim-1 (PubMed:12827206).</text>
</comment>
<comment type="subcellular location">
    <subcellularLocation>
        <location evidence="3 6 7">Nucleus</location>
    </subcellularLocation>
    <subcellularLocation>
        <location evidence="6 7">Chromosome</location>
    </subcellularLocation>
    <text evidence="6 7">Has diffuse nuclear appearance at interphase during mitosis in somatic and germline tissues (PubMed:12827206). Localizes to chromosomes at pachytene during meiosis (PubMed:14499625).</text>
</comment>
<comment type="tissue specificity">
    <text evidence="7">Expressed in gonadal cells.</text>
</comment>
<comment type="disruption phenotype">
    <text evidence="5 6 7 8 9">RNAi-mediated knockdown results in embryonic lethality (PubMed:12808038, PubMed:12827206, PubMed:14560015, PubMed:16802858). RNAi-mediated knockdown from early in larval development results in sterile, uncoordinated (Unc), and protruding vulva phenotypes, in abnormal embryonic cell nuclei morphology and in defects in the mitotic and meiotic cells of gonads (PubMed:14499625, PubMed:14560015). RNAi-mediated knockdown results in somatic gonad cell division defects with a reduced number of pi uterine cells at the early- to mid-L4 larval stage (PubMed:14560015). RNAi-mediated knockdown results in chromosome segregation defects in early embryos with lagging chromosomes at the anaphase phase of mitosis (PubMed:12808038, PubMed:14499625, PubMed:16802858). RNAi-mediated knockdown results in defective homologous alignment of chromosomes and chromosome cohesion in meiosis (PubMed:14499625).</text>
</comment>
<comment type="similarity">
    <text evidence="11">Belongs to the SCC3 family.</text>
</comment>
<proteinExistence type="evidence at protein level"/>
<dbReference type="EMBL" id="BX284605">
    <property type="protein sequence ID" value="CAA99836.1"/>
    <property type="molecule type" value="Genomic_DNA"/>
</dbReference>
<dbReference type="PIR" id="T21091">
    <property type="entry name" value="T21091"/>
</dbReference>
<dbReference type="RefSeq" id="NP_506193.1">
    <property type="nucleotide sequence ID" value="NM_073792.6"/>
</dbReference>
<dbReference type="SMR" id="Q19555"/>
<dbReference type="ComplexPortal" id="CPX-967">
    <property type="entry name" value="Nuclear mitotic cohesin complex"/>
</dbReference>
<dbReference type="DIP" id="DIP-26563N"/>
<dbReference type="FunCoup" id="Q19555">
    <property type="interactions" value="2994"/>
</dbReference>
<dbReference type="IntAct" id="Q19555">
    <property type="interactions" value="2"/>
</dbReference>
<dbReference type="STRING" id="6239.F18E2.3.1"/>
<dbReference type="PaxDb" id="6239-F18E2.3"/>
<dbReference type="PeptideAtlas" id="Q19555"/>
<dbReference type="EnsemblMetazoa" id="F18E2.3.1">
    <property type="protein sequence ID" value="F18E2.3.1"/>
    <property type="gene ID" value="WBGene00004738"/>
</dbReference>
<dbReference type="GeneID" id="179749"/>
<dbReference type="KEGG" id="cel:CELE_F18E2.3"/>
<dbReference type="UCSC" id="F18E2.3">
    <property type="organism name" value="c. elegans"/>
</dbReference>
<dbReference type="AGR" id="WB:WBGene00004738"/>
<dbReference type="CTD" id="179749"/>
<dbReference type="WormBase" id="F18E2.3">
    <property type="protein sequence ID" value="CE05664"/>
    <property type="gene ID" value="WBGene00004738"/>
    <property type="gene designation" value="scc-3"/>
</dbReference>
<dbReference type="eggNOG" id="KOG2011">
    <property type="taxonomic scope" value="Eukaryota"/>
</dbReference>
<dbReference type="GeneTree" id="ENSGT00950000182972"/>
<dbReference type="HOGENOM" id="CLU_005067_1_0_1"/>
<dbReference type="InParanoid" id="Q19555"/>
<dbReference type="OMA" id="QIQEAAY"/>
<dbReference type="OrthoDB" id="498590at2759"/>
<dbReference type="PhylomeDB" id="Q19555"/>
<dbReference type="Reactome" id="R-CEL-2468052">
    <property type="pathway name" value="Establishment of Sister Chromatid Cohesion"/>
</dbReference>
<dbReference type="Reactome" id="R-CEL-2470946">
    <property type="pathway name" value="Cohesin Loading onto Chromatin"/>
</dbReference>
<dbReference type="Reactome" id="R-CEL-2500257">
    <property type="pathway name" value="Resolution of Sister Chromatid Cohesion"/>
</dbReference>
<dbReference type="Reactome" id="R-CEL-3108214">
    <property type="pathway name" value="SUMOylation of DNA damage response and repair proteins"/>
</dbReference>
<dbReference type="PRO" id="PR:Q19555"/>
<dbReference type="Proteomes" id="UP000001940">
    <property type="component" value="Chromosome V"/>
</dbReference>
<dbReference type="Bgee" id="WBGene00004738">
    <property type="expression patterns" value="Expressed in germ line (C elegans) and 4 other cell types or tissues"/>
</dbReference>
<dbReference type="GO" id="GO:0000785">
    <property type="term" value="C:chromatin"/>
    <property type="evidence" value="ECO:0000314"/>
    <property type="project" value="WormBase"/>
</dbReference>
<dbReference type="GO" id="GO:0008278">
    <property type="term" value="C:cohesin complex"/>
    <property type="evidence" value="ECO:0000353"/>
    <property type="project" value="WormBase"/>
</dbReference>
<dbReference type="GO" id="GO:0000793">
    <property type="term" value="C:condensed chromosome"/>
    <property type="evidence" value="ECO:0000314"/>
    <property type="project" value="WormBase"/>
</dbReference>
<dbReference type="GO" id="GO:0000444">
    <property type="term" value="C:MIS12/MIND type complex"/>
    <property type="evidence" value="ECO:0000314"/>
    <property type="project" value="ComplexPortal"/>
</dbReference>
<dbReference type="GO" id="GO:0005634">
    <property type="term" value="C:nucleus"/>
    <property type="evidence" value="ECO:0000314"/>
    <property type="project" value="ComplexPortal"/>
</dbReference>
<dbReference type="GO" id="GO:0003682">
    <property type="term" value="F:chromatin binding"/>
    <property type="evidence" value="ECO:0000318"/>
    <property type="project" value="GO_Central"/>
</dbReference>
<dbReference type="GO" id="GO:0003677">
    <property type="term" value="F:DNA binding"/>
    <property type="evidence" value="ECO:0000250"/>
    <property type="project" value="WormBase"/>
</dbReference>
<dbReference type="GO" id="GO:0051301">
    <property type="term" value="P:cell division"/>
    <property type="evidence" value="ECO:0007669"/>
    <property type="project" value="UniProtKB-KW"/>
</dbReference>
<dbReference type="GO" id="GO:1990918">
    <property type="term" value="P:double-strand break repair involved in meiotic recombination"/>
    <property type="evidence" value="ECO:0000315"/>
    <property type="project" value="UniProtKB"/>
</dbReference>
<dbReference type="GO" id="GO:0034087">
    <property type="term" value="P:establishment of mitotic sister chromatid cohesion"/>
    <property type="evidence" value="ECO:0000314"/>
    <property type="project" value="ComplexPortal"/>
</dbReference>
<dbReference type="GO" id="GO:0051177">
    <property type="term" value="P:meiotic sister chromatid cohesion"/>
    <property type="evidence" value="ECO:0000315"/>
    <property type="project" value="WormBase"/>
</dbReference>
<dbReference type="GO" id="GO:0000070">
    <property type="term" value="P:mitotic sister chromatid segregation"/>
    <property type="evidence" value="ECO:0000315"/>
    <property type="project" value="WormBase"/>
</dbReference>
<dbReference type="GO" id="GO:2000001">
    <property type="term" value="P:regulation of DNA damage checkpoint"/>
    <property type="evidence" value="ECO:0000315"/>
    <property type="project" value="UniProtKB"/>
</dbReference>
<dbReference type="GO" id="GO:0007062">
    <property type="term" value="P:sister chromatid cohesion"/>
    <property type="evidence" value="ECO:0000318"/>
    <property type="project" value="GO_Central"/>
</dbReference>
<dbReference type="InterPro" id="IPR016024">
    <property type="entry name" value="ARM-type_fold"/>
</dbReference>
<dbReference type="InterPro" id="IPR039662">
    <property type="entry name" value="Cohesin_Scc3/SA"/>
</dbReference>
<dbReference type="InterPro" id="IPR056396">
    <property type="entry name" value="HEAT_SCC3-SA"/>
</dbReference>
<dbReference type="InterPro" id="IPR020839">
    <property type="entry name" value="SCD"/>
</dbReference>
<dbReference type="InterPro" id="IPR013721">
    <property type="entry name" value="STAG"/>
</dbReference>
<dbReference type="PANTHER" id="PTHR11199:SF0">
    <property type="entry name" value="LD34181P-RELATED"/>
    <property type="match status" value="1"/>
</dbReference>
<dbReference type="PANTHER" id="PTHR11199">
    <property type="entry name" value="STROMAL ANTIGEN"/>
    <property type="match status" value="1"/>
</dbReference>
<dbReference type="Pfam" id="PF24571">
    <property type="entry name" value="HEAT_SCC3-SA"/>
    <property type="match status" value="1"/>
</dbReference>
<dbReference type="Pfam" id="PF21581">
    <property type="entry name" value="SCD"/>
    <property type="match status" value="1"/>
</dbReference>
<dbReference type="Pfam" id="PF08514">
    <property type="entry name" value="STAG"/>
    <property type="match status" value="1"/>
</dbReference>
<dbReference type="SUPFAM" id="SSF48371">
    <property type="entry name" value="ARM repeat"/>
    <property type="match status" value="1"/>
</dbReference>
<dbReference type="PROSITE" id="PS51425">
    <property type="entry name" value="SCD"/>
    <property type="match status" value="1"/>
</dbReference>
<name>SCC3_CAEEL</name>
<sequence length="1096" mass="124775">MSETPTDQSPQRMSTRNQARVNYTDMAAGNNSVEKEPVFRSPTASTRGRKKRAANVDVADLSASFGNLNNFSTPPKRGRPRGGGLGSARGGRAPMVRRTTTEESAEVDDRELVAAVKSGKKITEAVDRWIGRYNEKFLVAIAEMHQFFFAICGCKGIVTPQMSATLTYKDIICRMTEDFEEDSADYPLVHGGSLKKVRANLHNFIHTLIIRTKASMLFDSNLMDGFVQLLTGMADSQVRAFRHTATFCAMKITSALVDVTIELTQSKEKTSKQIEAEKAKLKNNSAGNEKYEALVAQRTQTEERAEEIRQIIGYLFRSVFVHRYRDVVPDIRCICIQELGHWMDVYPEHFVEDSYLKYIGWSMFDKVGDVRQRCIRALIPLFEKTLILDKLELFVNKFKDRLVSMLLDKDLETSIETVHLMRVLYTVFPTLLTIKDVVPIYELIYASNRPLAVAAGMFLNTKVFRSAEKPGKAPTAANIPLVKDLTTFFIEGDLHQHATYLVDALFESNPIVKDWATMGELLINDQYQLDSNFETKLIEILTCSVVQSATGEPPVGRHIVKKGAPSAKESRDLVEDRQRLTETLIPLIPRLITKFSSDNEKIINLVNIPLHFQLETYLSARMQTHLMELMEGLDSLIEKHLDEELLKAVAELYYHLTTNSSISALVEGHKMKLLDGVAAFIRKSMQQFDDDQMGEEEEALFVSYIKRMAAFAGFMDLRHWDLWDILLKVVSNYTREDTQRDVRERSMQMLFMQLCFDSMNIKKEGETPKADQVRKLKKRRDQLIRIVTETLNEEACGVEQAYLVICDLMILFGSQLAEESKALEPLIWRPDAMVLGNLKIFLDVNVFDVSNLDDMDQQEKIEVMHKMRQHVAQYAKLIIHGAMPVAEASHLIKRYQSHFQDFGDIFKNLLSKCREISFVETGVMICETLKTLYSQLDEDQGTDPLSESFNSIRDLAKRLGPAFGVDYAKNRFAISSLHKKAIDFAFEEYDKENHQMPKNIFFLEIAIEFSGKLLAQDKMAVVRYLNKIYTNRVGTSTVVWEPYRLYLGSLSDRNDDDNMSVRSGMTVTSNATMRSTASSTRGRGRGRGRSRIADDF</sequence>
<protein>
    <recommendedName>
        <fullName evidence="1">Cohesin subunit scc-3</fullName>
    </recommendedName>
</protein>